<comment type="function">
    <text evidence="1">Catalyzes the reversible conversion of 3-phosphohydroxypyruvate to phosphoserine and of 3-hydroxy-2-oxo-4-phosphonooxybutanoate to phosphohydroxythreonine.</text>
</comment>
<comment type="catalytic activity">
    <reaction evidence="1">
        <text>O-phospho-L-serine + 2-oxoglutarate = 3-phosphooxypyruvate + L-glutamate</text>
        <dbReference type="Rhea" id="RHEA:14329"/>
        <dbReference type="ChEBI" id="CHEBI:16810"/>
        <dbReference type="ChEBI" id="CHEBI:18110"/>
        <dbReference type="ChEBI" id="CHEBI:29985"/>
        <dbReference type="ChEBI" id="CHEBI:57524"/>
        <dbReference type="EC" id="2.6.1.52"/>
    </reaction>
</comment>
<comment type="catalytic activity">
    <reaction evidence="1">
        <text>4-(phosphooxy)-L-threonine + 2-oxoglutarate = (R)-3-hydroxy-2-oxo-4-phosphooxybutanoate + L-glutamate</text>
        <dbReference type="Rhea" id="RHEA:16573"/>
        <dbReference type="ChEBI" id="CHEBI:16810"/>
        <dbReference type="ChEBI" id="CHEBI:29985"/>
        <dbReference type="ChEBI" id="CHEBI:58452"/>
        <dbReference type="ChEBI" id="CHEBI:58538"/>
        <dbReference type="EC" id="2.6.1.52"/>
    </reaction>
</comment>
<comment type="cofactor">
    <cofactor evidence="1">
        <name>pyridoxal 5'-phosphate</name>
        <dbReference type="ChEBI" id="CHEBI:597326"/>
    </cofactor>
    <text evidence="1">Binds 1 pyridoxal phosphate per subunit.</text>
</comment>
<comment type="pathway">
    <text evidence="1">Amino-acid biosynthesis; L-serine biosynthesis; L-serine from 3-phospho-D-glycerate: step 2/3.</text>
</comment>
<comment type="pathway">
    <text evidence="1">Cofactor biosynthesis; pyridoxine 5'-phosphate biosynthesis; pyridoxine 5'-phosphate from D-erythrose 4-phosphate: step 3/5.</text>
</comment>
<comment type="subunit">
    <text evidence="1">Homodimer.</text>
</comment>
<comment type="subcellular location">
    <subcellularLocation>
        <location evidence="1">Cytoplasm</location>
    </subcellularLocation>
</comment>
<comment type="similarity">
    <text evidence="1">Belongs to the class-V pyridoxal-phosphate-dependent aminotransferase family. SerC subfamily.</text>
</comment>
<evidence type="ECO:0000255" key="1">
    <source>
        <dbReference type="HAMAP-Rule" id="MF_00160"/>
    </source>
</evidence>
<keyword id="KW-0028">Amino-acid biosynthesis</keyword>
<keyword id="KW-0032">Aminotransferase</keyword>
<keyword id="KW-0963">Cytoplasm</keyword>
<keyword id="KW-0663">Pyridoxal phosphate</keyword>
<keyword id="KW-0664">Pyridoxine biosynthesis</keyword>
<keyword id="KW-0718">Serine biosynthesis</keyword>
<keyword id="KW-0808">Transferase</keyword>
<sequence length="359" mass="39281">MRAYNFCAGPAALPTAVLEKAQQELLDWQGKGLSIMEMSHRSADYVAVAEKAEADLRKLMNIPENYKVLFLQGGASLQFSAIPLNLLGKNNKADYIHTGIWSEKALKEAKRYGDINVVEAGIKVDGKFAISEQSEWNLSDDAAYVHYADNETIGGLQFAGVPDVKAPLVCDFSSSILSAPLDVSKFGLIYAGAQKNIGPAGLTIVIIRDDLLDQAKAEIPSILKYADQAKNGSMVNTPSTYAWYLSGLVFEWLLEQGGVDAIHKVNLEKAQLLYGYIDSSDFYNNPIAIPNRSIMNVPFTLADEALEKQFLKEAEANHLLNLAGHRSVGGMRASIYNAVPLEGVQALIRFMDDFAKRNG</sequence>
<protein>
    <recommendedName>
        <fullName evidence="1">Phosphoserine aminotransferase</fullName>
        <ecNumber evidence="1">2.6.1.52</ecNumber>
    </recommendedName>
    <alternativeName>
        <fullName evidence="1">Phosphohydroxythreonine aminotransferase</fullName>
        <shortName evidence="1">PSAT</shortName>
    </alternativeName>
</protein>
<organism>
    <name type="scientific">Acinetobacter baumannii (strain ATCC 17978 / DSM 105126 / CIP 53.77 / LMG 1025 / NCDC KC755 / 5377)</name>
    <dbReference type="NCBI Taxonomy" id="400667"/>
    <lineage>
        <taxon>Bacteria</taxon>
        <taxon>Pseudomonadati</taxon>
        <taxon>Pseudomonadota</taxon>
        <taxon>Gammaproteobacteria</taxon>
        <taxon>Moraxellales</taxon>
        <taxon>Moraxellaceae</taxon>
        <taxon>Acinetobacter</taxon>
        <taxon>Acinetobacter calcoaceticus/baumannii complex</taxon>
    </lineage>
</organism>
<feature type="chain" id="PRO_1000097201" description="Phosphoserine aminotransferase">
    <location>
        <begin position="1"/>
        <end position="359"/>
    </location>
</feature>
<feature type="binding site" evidence="1">
    <location>
        <position position="41"/>
    </location>
    <ligand>
        <name>L-glutamate</name>
        <dbReference type="ChEBI" id="CHEBI:29985"/>
    </ligand>
</feature>
<feature type="binding site" evidence="1">
    <location>
        <begin position="75"/>
        <end position="76"/>
    </location>
    <ligand>
        <name>pyridoxal 5'-phosphate</name>
        <dbReference type="ChEBI" id="CHEBI:597326"/>
    </ligand>
</feature>
<feature type="binding site" evidence="1">
    <location>
        <position position="101"/>
    </location>
    <ligand>
        <name>pyridoxal 5'-phosphate</name>
        <dbReference type="ChEBI" id="CHEBI:597326"/>
    </ligand>
</feature>
<feature type="binding site" evidence="1">
    <location>
        <position position="152"/>
    </location>
    <ligand>
        <name>pyridoxal 5'-phosphate</name>
        <dbReference type="ChEBI" id="CHEBI:597326"/>
    </ligand>
</feature>
<feature type="binding site" evidence="1">
    <location>
        <position position="171"/>
    </location>
    <ligand>
        <name>pyridoxal 5'-phosphate</name>
        <dbReference type="ChEBI" id="CHEBI:597326"/>
    </ligand>
</feature>
<feature type="binding site" evidence="1">
    <location>
        <position position="194"/>
    </location>
    <ligand>
        <name>pyridoxal 5'-phosphate</name>
        <dbReference type="ChEBI" id="CHEBI:597326"/>
    </ligand>
</feature>
<feature type="binding site" evidence="1">
    <location>
        <begin position="236"/>
        <end position="237"/>
    </location>
    <ligand>
        <name>pyridoxal 5'-phosphate</name>
        <dbReference type="ChEBI" id="CHEBI:597326"/>
    </ligand>
</feature>
<feature type="modified residue" description="N6-(pyridoxal phosphate)lysine" evidence="1">
    <location>
        <position position="195"/>
    </location>
</feature>
<gene>
    <name evidence="1" type="primary">serC</name>
    <name type="ordered locus">A1S_2617</name>
</gene>
<dbReference type="EC" id="2.6.1.52" evidence="1"/>
<dbReference type="EMBL" id="CP000521">
    <property type="protein sequence ID" value="ABO13034.2"/>
    <property type="molecule type" value="Genomic_DNA"/>
</dbReference>
<dbReference type="RefSeq" id="WP_001203181.1">
    <property type="nucleotide sequence ID" value="NZ_CP053098.1"/>
</dbReference>
<dbReference type="SMR" id="A3M7Z0"/>
<dbReference type="GeneID" id="92894890"/>
<dbReference type="KEGG" id="acb:A1S_2617"/>
<dbReference type="HOGENOM" id="CLU_034866_0_2_6"/>
<dbReference type="UniPathway" id="UPA00135">
    <property type="reaction ID" value="UER00197"/>
</dbReference>
<dbReference type="UniPathway" id="UPA00244">
    <property type="reaction ID" value="UER00311"/>
</dbReference>
<dbReference type="GO" id="GO:0005737">
    <property type="term" value="C:cytoplasm"/>
    <property type="evidence" value="ECO:0007669"/>
    <property type="project" value="UniProtKB-SubCell"/>
</dbReference>
<dbReference type="GO" id="GO:0004648">
    <property type="term" value="F:O-phospho-L-serine:2-oxoglutarate aminotransferase activity"/>
    <property type="evidence" value="ECO:0007669"/>
    <property type="project" value="UniProtKB-UniRule"/>
</dbReference>
<dbReference type="GO" id="GO:0030170">
    <property type="term" value="F:pyridoxal phosphate binding"/>
    <property type="evidence" value="ECO:0007669"/>
    <property type="project" value="UniProtKB-UniRule"/>
</dbReference>
<dbReference type="GO" id="GO:0006564">
    <property type="term" value="P:L-serine biosynthetic process"/>
    <property type="evidence" value="ECO:0007669"/>
    <property type="project" value="UniProtKB-UniRule"/>
</dbReference>
<dbReference type="GO" id="GO:0008615">
    <property type="term" value="P:pyridoxine biosynthetic process"/>
    <property type="evidence" value="ECO:0007669"/>
    <property type="project" value="UniProtKB-UniRule"/>
</dbReference>
<dbReference type="CDD" id="cd00611">
    <property type="entry name" value="PSAT_like"/>
    <property type="match status" value="1"/>
</dbReference>
<dbReference type="FunFam" id="3.40.640.10:FF:000010">
    <property type="entry name" value="Phosphoserine aminotransferase"/>
    <property type="match status" value="1"/>
</dbReference>
<dbReference type="FunFam" id="3.90.1150.10:FF:000006">
    <property type="entry name" value="Phosphoserine aminotransferase"/>
    <property type="match status" value="1"/>
</dbReference>
<dbReference type="Gene3D" id="3.90.1150.10">
    <property type="entry name" value="Aspartate Aminotransferase, domain 1"/>
    <property type="match status" value="1"/>
</dbReference>
<dbReference type="Gene3D" id="3.40.640.10">
    <property type="entry name" value="Type I PLP-dependent aspartate aminotransferase-like (Major domain)"/>
    <property type="match status" value="1"/>
</dbReference>
<dbReference type="HAMAP" id="MF_00160">
    <property type="entry name" value="SerC_aminotrans_5"/>
    <property type="match status" value="1"/>
</dbReference>
<dbReference type="InterPro" id="IPR000192">
    <property type="entry name" value="Aminotrans_V_dom"/>
</dbReference>
<dbReference type="InterPro" id="IPR020578">
    <property type="entry name" value="Aminotrans_V_PyrdxlP_BS"/>
</dbReference>
<dbReference type="InterPro" id="IPR022278">
    <property type="entry name" value="Pser_aminoTfrase"/>
</dbReference>
<dbReference type="InterPro" id="IPR015424">
    <property type="entry name" value="PyrdxlP-dep_Trfase"/>
</dbReference>
<dbReference type="InterPro" id="IPR015421">
    <property type="entry name" value="PyrdxlP-dep_Trfase_major"/>
</dbReference>
<dbReference type="InterPro" id="IPR015422">
    <property type="entry name" value="PyrdxlP-dep_Trfase_small"/>
</dbReference>
<dbReference type="NCBIfam" id="NF003764">
    <property type="entry name" value="PRK05355.1"/>
    <property type="match status" value="1"/>
</dbReference>
<dbReference type="NCBIfam" id="TIGR01364">
    <property type="entry name" value="serC_1"/>
    <property type="match status" value="1"/>
</dbReference>
<dbReference type="PANTHER" id="PTHR43247">
    <property type="entry name" value="PHOSPHOSERINE AMINOTRANSFERASE"/>
    <property type="match status" value="1"/>
</dbReference>
<dbReference type="PANTHER" id="PTHR43247:SF1">
    <property type="entry name" value="PHOSPHOSERINE AMINOTRANSFERASE"/>
    <property type="match status" value="1"/>
</dbReference>
<dbReference type="Pfam" id="PF00266">
    <property type="entry name" value="Aminotran_5"/>
    <property type="match status" value="1"/>
</dbReference>
<dbReference type="PIRSF" id="PIRSF000525">
    <property type="entry name" value="SerC"/>
    <property type="match status" value="1"/>
</dbReference>
<dbReference type="SUPFAM" id="SSF53383">
    <property type="entry name" value="PLP-dependent transferases"/>
    <property type="match status" value="1"/>
</dbReference>
<dbReference type="PROSITE" id="PS00595">
    <property type="entry name" value="AA_TRANSFER_CLASS_5"/>
    <property type="match status" value="1"/>
</dbReference>
<proteinExistence type="inferred from homology"/>
<name>SERC_ACIBT</name>
<reference key="1">
    <citation type="journal article" date="2007" name="Genes Dev.">
        <title>New insights into Acinetobacter baumannii pathogenesis revealed by high-density pyrosequencing and transposon mutagenesis.</title>
        <authorList>
            <person name="Smith M.G."/>
            <person name="Gianoulis T.A."/>
            <person name="Pukatzki S."/>
            <person name="Mekalanos J.J."/>
            <person name="Ornston L.N."/>
            <person name="Gerstein M."/>
            <person name="Snyder M."/>
        </authorList>
    </citation>
    <scope>NUCLEOTIDE SEQUENCE [LARGE SCALE GENOMIC DNA]</scope>
    <source>
        <strain>ATCC 17978 / DSM 105126 / CIP 53.77 / LMG 1025 / NCDC KC755 / 5377</strain>
    </source>
</reference>
<accession>A3M7Z0</accession>